<comment type="function">
    <text evidence="1">NQR complex catalyzes the reduction of ubiquinone-1 to ubiquinol by two successive reactions, coupled with the transport of Na(+) ions from the cytoplasm to the periplasm. NqrA to NqrE are probably involved in the second step, the conversion of ubisemiquinone to ubiquinol.</text>
</comment>
<comment type="catalytic activity">
    <reaction evidence="1">
        <text>a ubiquinone + n Na(+)(in) + NADH + H(+) = a ubiquinol + n Na(+)(out) + NAD(+)</text>
        <dbReference type="Rhea" id="RHEA:47748"/>
        <dbReference type="Rhea" id="RHEA-COMP:9565"/>
        <dbReference type="Rhea" id="RHEA-COMP:9566"/>
        <dbReference type="ChEBI" id="CHEBI:15378"/>
        <dbReference type="ChEBI" id="CHEBI:16389"/>
        <dbReference type="ChEBI" id="CHEBI:17976"/>
        <dbReference type="ChEBI" id="CHEBI:29101"/>
        <dbReference type="ChEBI" id="CHEBI:57540"/>
        <dbReference type="ChEBI" id="CHEBI:57945"/>
        <dbReference type="EC" id="7.2.1.1"/>
    </reaction>
</comment>
<comment type="subunit">
    <text evidence="1">Composed of six subunits; NqrA, NqrB, NqrC, NqrD, NqrE and NqrF.</text>
</comment>
<comment type="subcellular location">
    <subcellularLocation>
        <location evidence="1">Cell inner membrane</location>
        <topology evidence="1">Multi-pass membrane protein</topology>
    </subcellularLocation>
</comment>
<comment type="similarity">
    <text evidence="1">Belongs to the NqrDE/RnfAE family.</text>
</comment>
<proteinExistence type="inferred from homology"/>
<evidence type="ECO:0000255" key="1">
    <source>
        <dbReference type="HAMAP-Rule" id="MF_00429"/>
    </source>
</evidence>
<name>NQRE_SERP5</name>
<accession>A8GAC3</accession>
<organism>
    <name type="scientific">Serratia proteamaculans (strain 568)</name>
    <dbReference type="NCBI Taxonomy" id="399741"/>
    <lineage>
        <taxon>Bacteria</taxon>
        <taxon>Pseudomonadati</taxon>
        <taxon>Pseudomonadota</taxon>
        <taxon>Gammaproteobacteria</taxon>
        <taxon>Enterobacterales</taxon>
        <taxon>Yersiniaceae</taxon>
        <taxon>Serratia</taxon>
    </lineage>
</organism>
<dbReference type="EC" id="7.2.1.1" evidence="1"/>
<dbReference type="EMBL" id="CP000826">
    <property type="protein sequence ID" value="ABV40063.1"/>
    <property type="molecule type" value="Genomic_DNA"/>
</dbReference>
<dbReference type="SMR" id="A8GAC3"/>
<dbReference type="STRING" id="399741.Spro_0957"/>
<dbReference type="KEGG" id="spe:Spro_0957"/>
<dbReference type="eggNOG" id="COG2209">
    <property type="taxonomic scope" value="Bacteria"/>
</dbReference>
<dbReference type="HOGENOM" id="CLU_095255_0_0_6"/>
<dbReference type="OrthoDB" id="9803631at2"/>
<dbReference type="GO" id="GO:0009276">
    <property type="term" value="C:Gram-negative-bacterium-type cell wall"/>
    <property type="evidence" value="ECO:0007669"/>
    <property type="project" value="InterPro"/>
</dbReference>
<dbReference type="GO" id="GO:0005886">
    <property type="term" value="C:plasma membrane"/>
    <property type="evidence" value="ECO:0007669"/>
    <property type="project" value="UniProtKB-SubCell"/>
</dbReference>
<dbReference type="GO" id="GO:0016655">
    <property type="term" value="F:oxidoreductase activity, acting on NAD(P)H, quinone or similar compound as acceptor"/>
    <property type="evidence" value="ECO:0007669"/>
    <property type="project" value="UniProtKB-UniRule"/>
</dbReference>
<dbReference type="GO" id="GO:0022904">
    <property type="term" value="P:respiratory electron transport chain"/>
    <property type="evidence" value="ECO:0007669"/>
    <property type="project" value="InterPro"/>
</dbReference>
<dbReference type="GO" id="GO:0006814">
    <property type="term" value="P:sodium ion transport"/>
    <property type="evidence" value="ECO:0007669"/>
    <property type="project" value="UniProtKB-UniRule"/>
</dbReference>
<dbReference type="HAMAP" id="MF_00429">
    <property type="entry name" value="NqrE"/>
    <property type="match status" value="1"/>
</dbReference>
<dbReference type="InterPro" id="IPR003667">
    <property type="entry name" value="NqrDE/RnfAE"/>
</dbReference>
<dbReference type="InterPro" id="IPR050133">
    <property type="entry name" value="NqrDE/RnfAE_oxidrdctase"/>
</dbReference>
<dbReference type="InterPro" id="IPR010967">
    <property type="entry name" value="NqrE"/>
</dbReference>
<dbReference type="NCBIfam" id="TIGR01940">
    <property type="entry name" value="nqrE"/>
    <property type="match status" value="1"/>
</dbReference>
<dbReference type="PANTHER" id="PTHR30335">
    <property type="entry name" value="INTEGRAL MEMBRANE PROTEIN OF SOXR-REDUCING COMPLEX"/>
    <property type="match status" value="1"/>
</dbReference>
<dbReference type="PANTHER" id="PTHR30335:SF1">
    <property type="entry name" value="NA(+)-TRANSLOCATING NADH-QUINONE REDUCTASE SUBUNIT E"/>
    <property type="match status" value="1"/>
</dbReference>
<dbReference type="Pfam" id="PF02508">
    <property type="entry name" value="Rnf-Nqr"/>
    <property type="match status" value="1"/>
</dbReference>
<dbReference type="PIRSF" id="PIRSF006102">
    <property type="entry name" value="NQR_DE"/>
    <property type="match status" value="1"/>
</dbReference>
<keyword id="KW-0997">Cell inner membrane</keyword>
<keyword id="KW-1003">Cell membrane</keyword>
<keyword id="KW-0406">Ion transport</keyword>
<keyword id="KW-0472">Membrane</keyword>
<keyword id="KW-0520">NAD</keyword>
<keyword id="KW-0915">Sodium</keyword>
<keyword id="KW-0739">Sodium transport</keyword>
<keyword id="KW-1278">Translocase</keyword>
<keyword id="KW-0812">Transmembrane</keyword>
<keyword id="KW-1133">Transmembrane helix</keyword>
<keyword id="KW-0813">Transport</keyword>
<keyword id="KW-0830">Ubiquinone</keyword>
<feature type="chain" id="PRO_1000060216" description="Na(+)-translocating NADH-quinone reductase subunit E">
    <location>
        <begin position="1"/>
        <end position="198"/>
    </location>
</feature>
<feature type="transmembrane region" description="Helical" evidence="1">
    <location>
        <begin position="11"/>
        <end position="31"/>
    </location>
</feature>
<feature type="transmembrane region" description="Helical" evidence="1">
    <location>
        <begin position="35"/>
        <end position="55"/>
    </location>
</feature>
<feature type="transmembrane region" description="Helical" evidence="1">
    <location>
        <begin position="77"/>
        <end position="97"/>
    </location>
</feature>
<feature type="transmembrane region" description="Helical" evidence="1">
    <location>
        <begin position="110"/>
        <end position="130"/>
    </location>
</feature>
<feature type="transmembrane region" description="Helical" evidence="1">
    <location>
        <begin position="140"/>
        <end position="160"/>
    </location>
</feature>
<feature type="transmembrane region" description="Helical" evidence="1">
    <location>
        <begin position="176"/>
        <end position="196"/>
    </location>
</feature>
<reference key="1">
    <citation type="submission" date="2007-09" db="EMBL/GenBank/DDBJ databases">
        <title>Complete sequence of chromosome of Serratia proteamaculans 568.</title>
        <authorList>
            <consortium name="US DOE Joint Genome Institute"/>
            <person name="Copeland A."/>
            <person name="Lucas S."/>
            <person name="Lapidus A."/>
            <person name="Barry K."/>
            <person name="Glavina del Rio T."/>
            <person name="Dalin E."/>
            <person name="Tice H."/>
            <person name="Pitluck S."/>
            <person name="Chain P."/>
            <person name="Malfatti S."/>
            <person name="Shin M."/>
            <person name="Vergez L."/>
            <person name="Schmutz J."/>
            <person name="Larimer F."/>
            <person name="Land M."/>
            <person name="Hauser L."/>
            <person name="Kyrpides N."/>
            <person name="Kim E."/>
            <person name="Taghavi S."/>
            <person name="Newman L."/>
            <person name="Vangronsveld J."/>
            <person name="van der Lelie D."/>
            <person name="Richardson P."/>
        </authorList>
    </citation>
    <scope>NUCLEOTIDE SEQUENCE [LARGE SCALE GENOMIC DNA]</scope>
    <source>
        <strain>568</strain>
    </source>
</reference>
<protein>
    <recommendedName>
        <fullName evidence="1">Na(+)-translocating NADH-quinone reductase subunit E</fullName>
        <shortName evidence="1">Na(+)-NQR subunit E</shortName>
        <shortName evidence="1">Na(+)-translocating NQR subunit E</shortName>
        <ecNumber evidence="1">7.2.1.1</ecNumber>
    </recommendedName>
    <alternativeName>
        <fullName evidence="1">NQR complex subunit E</fullName>
    </alternativeName>
    <alternativeName>
        <fullName evidence="1">NQR-1 subunit E</fullName>
    </alternativeName>
</protein>
<gene>
    <name evidence="1" type="primary">nqrE</name>
    <name type="ordered locus">Spro_0957</name>
</gene>
<sequence>MEHYISLFVRAVFVENMALAFFLGMCTFLAVSKKVSTAFGLGIAVTLVLGISVPVNNLVYNLILRDGALVEGVDLSFLNFITFIGVIAALVQILEMILDRFFPSLYNALGIFLPLITVNCAIFGGVSFMVQRDYNFAESVVYGFGSGTGWMLAIVAMAGIREKLKYANVPAGLRGLGITFITTGLMALGFMSFSGVQL</sequence>